<proteinExistence type="evidence at protein level"/>
<organism>
    <name type="scientific">Enterococcus faecalis</name>
    <name type="common">Streptococcus faecalis</name>
    <dbReference type="NCBI Taxonomy" id="1351"/>
    <lineage>
        <taxon>Bacteria</taxon>
        <taxon>Bacillati</taxon>
        <taxon>Bacillota</taxon>
        <taxon>Bacilli</taxon>
        <taxon>Lactobacillales</taxon>
        <taxon>Enterococcaceae</taxon>
        <taxon>Enterococcus</taxon>
    </lineage>
</organism>
<dbReference type="EMBL" id="M37184">
    <property type="protein sequence ID" value="AAA19427.1"/>
    <property type="molecule type" value="Genomic_DNA"/>
</dbReference>
<dbReference type="EMBL" id="U09422">
    <property type="protein sequence ID" value="AAB60030.1"/>
    <property type="molecule type" value="Genomic_DNA"/>
</dbReference>
<dbReference type="RefSeq" id="WP_010785527.1">
    <property type="nucleotide sequence ID" value="NZ_SIXZ01000015.1"/>
</dbReference>
<dbReference type="PDB" id="1B69">
    <property type="method" value="NMR"/>
    <property type="chains" value="A=3-71"/>
</dbReference>
<dbReference type="PDB" id="1BB8">
    <property type="method" value="NMR"/>
    <property type="chains" value="A=3-73"/>
</dbReference>
<dbReference type="PDB" id="1TN9">
    <property type="method" value="NMR"/>
    <property type="chains" value="A=3-71"/>
</dbReference>
<dbReference type="PDB" id="2BB8">
    <property type="method" value="NMR"/>
    <property type="chains" value="A=3-73"/>
</dbReference>
<dbReference type="PDBsum" id="1B69"/>
<dbReference type="PDBsum" id="1BB8"/>
<dbReference type="PDBsum" id="1TN9"/>
<dbReference type="PDBsum" id="2BB8"/>
<dbReference type="BMRB" id="P22886"/>
<dbReference type="SMR" id="P22886"/>
<dbReference type="eggNOG" id="COG0582">
    <property type="taxonomic scope" value="Bacteria"/>
</dbReference>
<dbReference type="EvolutionaryTrace" id="P22886"/>
<dbReference type="GO" id="GO:0003677">
    <property type="term" value="F:DNA binding"/>
    <property type="evidence" value="ECO:0007669"/>
    <property type="project" value="UniProtKB-KW"/>
</dbReference>
<dbReference type="GO" id="GO:0008907">
    <property type="term" value="F:integrase activity"/>
    <property type="evidence" value="ECO:0007669"/>
    <property type="project" value="InterPro"/>
</dbReference>
<dbReference type="GO" id="GO:0006310">
    <property type="term" value="P:DNA recombination"/>
    <property type="evidence" value="ECO:0007669"/>
    <property type="project" value="UniProtKB-KW"/>
</dbReference>
<dbReference type="GO" id="GO:0075713">
    <property type="term" value="P:establishment of integrated proviral latency"/>
    <property type="evidence" value="ECO:0007669"/>
    <property type="project" value="UniProtKB-KW"/>
</dbReference>
<dbReference type="GO" id="GO:0046718">
    <property type="term" value="P:symbiont entry into host cell"/>
    <property type="evidence" value="ECO:0007669"/>
    <property type="project" value="UniProtKB-KW"/>
</dbReference>
<dbReference type="GO" id="GO:0044826">
    <property type="term" value="P:viral genome integration into host DNA"/>
    <property type="evidence" value="ECO:0007669"/>
    <property type="project" value="UniProtKB-KW"/>
</dbReference>
<dbReference type="CDD" id="cd01189">
    <property type="entry name" value="INT_ICEBs1_C_like"/>
    <property type="match status" value="1"/>
</dbReference>
<dbReference type="Gene3D" id="1.10.150.130">
    <property type="match status" value="1"/>
</dbReference>
<dbReference type="Gene3D" id="3.30.160.60">
    <property type="entry name" value="Classic Zinc Finger"/>
    <property type="match status" value="1"/>
</dbReference>
<dbReference type="Gene3D" id="1.10.443.10">
    <property type="entry name" value="Intergrase catalytic core"/>
    <property type="match status" value="1"/>
</dbReference>
<dbReference type="InterPro" id="IPR044068">
    <property type="entry name" value="CB"/>
</dbReference>
<dbReference type="InterPro" id="IPR016177">
    <property type="entry name" value="DNA-bd_dom_sf"/>
</dbReference>
<dbReference type="InterPro" id="IPR011010">
    <property type="entry name" value="DNA_brk_join_enz"/>
</dbReference>
<dbReference type="InterPro" id="IPR013762">
    <property type="entry name" value="Integrase-like_cat_sf"/>
</dbReference>
<dbReference type="InterPro" id="IPR002104">
    <property type="entry name" value="Integrase_catalytic"/>
</dbReference>
<dbReference type="InterPro" id="IPR010998">
    <property type="entry name" value="Integrase_recombinase_N"/>
</dbReference>
<dbReference type="InterPro" id="IPR004191">
    <property type="entry name" value="Integrase_Tn916-type_DNA-bd_N"/>
</dbReference>
<dbReference type="InterPro" id="IPR050090">
    <property type="entry name" value="Tyrosine_recombinase_XerCD"/>
</dbReference>
<dbReference type="PANTHER" id="PTHR30349:SF41">
    <property type="entry name" value="INTEGRASE_RECOMBINASE PROTEIN MJ0367-RELATED"/>
    <property type="match status" value="1"/>
</dbReference>
<dbReference type="PANTHER" id="PTHR30349">
    <property type="entry name" value="PHAGE INTEGRASE-RELATED"/>
    <property type="match status" value="1"/>
</dbReference>
<dbReference type="Pfam" id="PF02920">
    <property type="entry name" value="Integrase_DNA"/>
    <property type="match status" value="1"/>
</dbReference>
<dbReference type="Pfam" id="PF00589">
    <property type="entry name" value="Phage_integrase"/>
    <property type="match status" value="1"/>
</dbReference>
<dbReference type="SUPFAM" id="SSF56349">
    <property type="entry name" value="DNA breaking-rejoining enzymes"/>
    <property type="match status" value="1"/>
</dbReference>
<dbReference type="SUPFAM" id="SSF54171">
    <property type="entry name" value="DNA-binding domain"/>
    <property type="match status" value="1"/>
</dbReference>
<dbReference type="PROSITE" id="PS51900">
    <property type="entry name" value="CB"/>
    <property type="match status" value="1"/>
</dbReference>
<dbReference type="PROSITE" id="PS51898">
    <property type="entry name" value="TYR_RECOMBINASE"/>
    <property type="match status" value="1"/>
</dbReference>
<reference key="1">
    <citation type="submission" date="1990-07" db="EMBL/GenBank/DDBJ databases">
        <authorList>
            <person name="Clewell D.B."/>
            <person name="Flannagan S.E."/>
            <person name="Zitzow L.A."/>
            <person name="Su Y.A."/>
            <person name="He P."/>
            <person name="Senghas E."/>
            <person name="Weaver K.E."/>
        </authorList>
    </citation>
    <scope>NUCLEOTIDE SEQUENCE [GENOMIC DNA]</scope>
    <source>
        <strain>DS16</strain>
        <transposon>Tn916</transposon>
    </source>
</reference>
<reference key="2">
    <citation type="journal article" date="1994" name="Plasmid">
        <title>Nucleotide sequence of the 18-kb conjugative transposon Tn916 from Enterococcus faecalis.</title>
        <authorList>
            <person name="Flannagan S.E."/>
            <person name="Zitzow L.A."/>
            <person name="Su Y.A."/>
            <person name="Clewell D.B."/>
        </authorList>
    </citation>
    <scope>NUCLEOTIDE SEQUENCE [GENOMIC DNA]</scope>
    <source>
        <strain>DS16</strain>
        <transposon>Tn916</transposon>
    </source>
</reference>
<reference key="3">
    <citation type="journal article" date="1998" name="Nat. Struct. Biol.">
        <title>Site-specific DNA binding using a variation of the double stranded RNA binding motif.</title>
        <authorList>
            <person name="Connolly K.M."/>
            <person name="Wojciak J.M."/>
            <person name="Clubb R.T."/>
        </authorList>
    </citation>
    <scope>STRUCTURE BY NMR OF 3-73</scope>
</reference>
<comment type="similarity">
    <text evidence="3">Belongs to the 'phage' integrase family.</text>
</comment>
<gene>
    <name type="primary">Int-Tn</name>
</gene>
<name>TNR6_ENTFL</name>
<evidence type="ECO:0000255" key="1">
    <source>
        <dbReference type="PROSITE-ProRule" id="PRU01246"/>
    </source>
</evidence>
<evidence type="ECO:0000255" key="2">
    <source>
        <dbReference type="PROSITE-ProRule" id="PRU01248"/>
    </source>
</evidence>
<evidence type="ECO:0000305" key="3"/>
<evidence type="ECO:0007829" key="4">
    <source>
        <dbReference type="PDB" id="1B69"/>
    </source>
</evidence>
<protein>
    <recommendedName>
        <fullName>Transposase from transposon Tn916</fullName>
    </recommendedName>
    <alternativeName>
        <fullName>Integrase</fullName>
    </alternativeName>
</protein>
<accession>P22886</accession>
<feature type="chain" id="PRO_0000197559" description="Transposase from transposon Tn916">
    <location>
        <begin position="1"/>
        <end position="405"/>
    </location>
</feature>
<feature type="domain" description="Core-binding (CB)" evidence="2">
    <location>
        <begin position="79"/>
        <end position="163"/>
    </location>
</feature>
<feature type="domain" description="Tyr recombinase" evidence="1">
    <location>
        <begin position="186"/>
        <end position="392"/>
    </location>
</feature>
<feature type="active site" evidence="1">
    <location>
        <position position="225"/>
    </location>
</feature>
<feature type="active site" evidence="1">
    <location>
        <position position="264"/>
    </location>
</feature>
<feature type="active site" evidence="1">
    <location>
        <position position="343"/>
    </location>
</feature>
<feature type="active site" evidence="1">
    <location>
        <position position="346"/>
    </location>
</feature>
<feature type="active site" evidence="1">
    <location>
        <position position="369"/>
    </location>
</feature>
<feature type="active site" description="O-(3'-phospho-DNA)-tyrosine intermediate" evidence="1">
    <location>
        <position position="379"/>
    </location>
</feature>
<feature type="strand" evidence="4">
    <location>
        <begin position="8"/>
        <end position="11"/>
    </location>
</feature>
<feature type="strand" evidence="4">
    <location>
        <begin position="17"/>
        <end position="19"/>
    </location>
</feature>
<feature type="strand" evidence="4">
    <location>
        <begin position="21"/>
        <end position="23"/>
    </location>
</feature>
<feature type="strand" evidence="4">
    <location>
        <begin position="25"/>
        <end position="30"/>
    </location>
</feature>
<feature type="strand" evidence="4">
    <location>
        <begin position="34"/>
        <end position="42"/>
    </location>
</feature>
<feature type="helix" evidence="4">
    <location>
        <begin position="60"/>
        <end position="68"/>
    </location>
</feature>
<keyword id="KW-0002">3D-structure</keyword>
<keyword id="KW-0229">DNA integration</keyword>
<keyword id="KW-0233">DNA recombination</keyword>
<keyword id="KW-0238">DNA-binding</keyword>
<keyword id="KW-0814">Transposable element</keyword>
<keyword id="KW-1179">Viral genome integration</keyword>
<keyword id="KW-1160">Virus entry into host cell</keyword>
<sequence>MSEKRRDNRGRILKTGESQRKDGRYLYKYIDSFGEPQFVYSWKLVATDRVPAGKRDCISLREKIAELQKDIHDGIDVVGKKMTLCQLYAKQNAQRPKVRKNTETGRKYLMDILKKDKLGVRSIDSIKPSDAKEWAIRMSENGYAYQTINNYKRSLKASFYIAIQDDCVRKNPFDFQLKAVLDDDTVPKTVLTEEQEEKLLAFAKADKTYSKNYDEILILLKTGLRISEFGGLTLPDLDFENRLVNIDHQLLRDTEIGYYIETPKTKSGERQVPMVEEAYQAFKRVLANRKNDKRVEIDGYSDFLFLNRKNYPKVASDYNGMMKGLVKKYNKYNEDKLPHITPHSLRHTFCTNYANAGMNPKALQYIMGHANIAMTLNYYAHATFDSAMAEMKRLNKEKQQERLVA</sequence>